<sequence>MAVYAVTGGAGFLGRYIVKLLISADDVQEIRVIDIVEDPQPITSKVKVINYIQCDINDFDKVREALDGVNLIIHTAALVDVFGKYTDNEIMKVNYYGTQTILAACVDLGIKYLIYTSSMEAIGPNKHGDPFIGHEHTLYDISPGHVYAKSKRMAEQLVMKANNSVIMNGAKLYTCCLRPTGIYGEGDKLTKVFYEQCKQHGNIMYRTVDDDAVHSRVYVGNVAWMHVLAAKYIQYPGSEIKGNAYFCYDYSPSCSYDMFNLLLMKPLGIEQGSRIPRWMLKMYACKNDMKRILFRKPSLLNNYTLKISNTTFEVRTNNAELDFNYSPIFNVDVAFERTRKWLEESE</sequence>
<evidence type="ECO:0000250" key="1"/>
<evidence type="ECO:0000269" key="2">
    <source>
    </source>
</evidence>
<evidence type="ECO:0000269" key="3">
    <source>
    </source>
</evidence>
<evidence type="ECO:0000305" key="4"/>
<protein>
    <recommendedName>
        <fullName>3 beta-hydroxysteroid dehydrogenase/Delta 5--&gt;4-isomerase</fullName>
        <shortName>3-beta-HSD</shortName>
    </recommendedName>
    <domain>
        <recommendedName>
            <fullName>3-beta-hydroxy-Delta(5)-steroid dehydrogenase</fullName>
            <ecNumber>1.1.1.145</ecNumber>
        </recommendedName>
        <alternativeName>
            <fullName>3-beta-hydroxy-5-ene steroid dehydrogenase</fullName>
        </alternativeName>
        <alternativeName>
            <fullName>Progesterone reductase</fullName>
        </alternativeName>
    </domain>
    <domain>
        <recommendedName>
            <fullName>Steroid Delta-isomerase</fullName>
            <ecNumber>5.3.3.1</ecNumber>
        </recommendedName>
        <alternativeName>
            <fullName>Delta-5-3-ketosteroid isomerase</fullName>
        </alternativeName>
    </domain>
</protein>
<organism>
    <name type="scientific">Vaccinia virus (strain Western Reserve)</name>
    <name type="common">VACV</name>
    <name type="synonym">Vaccinia virus (strain WR)</name>
    <dbReference type="NCBI Taxonomy" id="10254"/>
    <lineage>
        <taxon>Viruses</taxon>
        <taxon>Varidnaviria</taxon>
        <taxon>Bamfordvirae</taxon>
        <taxon>Nucleocytoviricota</taxon>
        <taxon>Pokkesviricetes</taxon>
        <taxon>Chitovirales</taxon>
        <taxon>Poxviridae</taxon>
        <taxon>Chordopoxvirinae</taxon>
        <taxon>Orthopoxvirus</taxon>
        <taxon>Vaccinia virus</taxon>
    </lineage>
</organism>
<dbReference type="EC" id="1.1.1.145"/>
<dbReference type="EC" id="5.3.3.1"/>
<dbReference type="EMBL" id="M72474">
    <property type="protein sequence ID" value="AAA48311.1"/>
    <property type="molecule type" value="Genomic_DNA"/>
</dbReference>
<dbReference type="EMBL" id="D11079">
    <property type="protein sequence ID" value="BAA01818.1"/>
    <property type="molecule type" value="Genomic_DNA"/>
</dbReference>
<dbReference type="EMBL" id="AY243312">
    <property type="protein sequence ID" value="AAO89449.1"/>
    <property type="molecule type" value="Genomic_DNA"/>
</dbReference>
<dbReference type="PIR" id="E40897">
    <property type="entry name" value="WMVZ2W"/>
</dbReference>
<dbReference type="SMR" id="P26670"/>
<dbReference type="DNASU" id="3707700"/>
<dbReference type="KEGG" id="vg:3707700"/>
<dbReference type="UniPathway" id="UPA00062"/>
<dbReference type="Proteomes" id="UP000000344">
    <property type="component" value="Genome"/>
</dbReference>
<dbReference type="GO" id="GO:0003854">
    <property type="term" value="F:3-beta-hydroxy-Delta5-steroid dehydrogenase (NAD+) activity"/>
    <property type="evidence" value="ECO:0007669"/>
    <property type="project" value="UniProtKB-EC"/>
</dbReference>
<dbReference type="GO" id="GO:0004769">
    <property type="term" value="F:steroid Delta-isomerase activity"/>
    <property type="evidence" value="ECO:0007669"/>
    <property type="project" value="UniProtKB-EC"/>
</dbReference>
<dbReference type="GO" id="GO:0006694">
    <property type="term" value="P:steroid biosynthetic process"/>
    <property type="evidence" value="ECO:0007669"/>
    <property type="project" value="UniProtKB-UniPathway"/>
</dbReference>
<dbReference type="FunFam" id="3.40.50.720:FF:000495">
    <property type="entry name" value="3 hydroxysteroid dehydrogenase, putative"/>
    <property type="match status" value="1"/>
</dbReference>
<dbReference type="Gene3D" id="3.40.50.720">
    <property type="entry name" value="NAD(P)-binding Rossmann-like Domain"/>
    <property type="match status" value="1"/>
</dbReference>
<dbReference type="InterPro" id="IPR002225">
    <property type="entry name" value="3Beta_OHSteriod_DH/Estase"/>
</dbReference>
<dbReference type="InterPro" id="IPR050177">
    <property type="entry name" value="Lipid_A_modif_metabolic_enz"/>
</dbReference>
<dbReference type="InterPro" id="IPR036291">
    <property type="entry name" value="NAD(P)-bd_dom_sf"/>
</dbReference>
<dbReference type="PANTHER" id="PTHR43245">
    <property type="entry name" value="BIFUNCTIONAL POLYMYXIN RESISTANCE PROTEIN ARNA"/>
    <property type="match status" value="1"/>
</dbReference>
<dbReference type="PANTHER" id="PTHR43245:SF51">
    <property type="entry name" value="SHORT CHAIN DEHYDROGENASE_REDUCTASE FAMILY 42E, MEMBER 2"/>
    <property type="match status" value="1"/>
</dbReference>
<dbReference type="Pfam" id="PF01073">
    <property type="entry name" value="3Beta_HSD"/>
    <property type="match status" value="1"/>
</dbReference>
<dbReference type="SUPFAM" id="SSF51735">
    <property type="entry name" value="NAD(P)-binding Rossmann-fold domains"/>
    <property type="match status" value="1"/>
</dbReference>
<reference key="1">
    <citation type="journal article" date="1991" name="J. Virol.">
        <title>Sequence analysis, expression, and deletion of a vaccinia virus gene encoding a homolog of profilin, a eukaryotic actin-binding protein.</title>
        <authorList>
            <person name="Blasco R."/>
            <person name="Cole N.B."/>
            <person name="Moss B."/>
        </authorList>
    </citation>
    <scope>NUCLEOTIDE SEQUENCE [GENOMIC DNA]</scope>
</reference>
<reference key="2">
    <citation type="journal article" date="1991" name="J. Gen. Virol.">
        <title>Nucleotide sequence of 42 kbp of vaccinia virus strain WR from near the right inverted terminal repeat.</title>
        <authorList>
            <person name="Smith G.L."/>
            <person name="Chan Y.S."/>
            <person name="Howard S.T."/>
        </authorList>
    </citation>
    <scope>NUCLEOTIDE SEQUENCE [GENOMIC DNA]</scope>
</reference>
<reference key="3">
    <citation type="submission" date="2003-02" db="EMBL/GenBank/DDBJ databases">
        <title>Sequencing of the coding region of Vaccinia-WR to an average 9-fold redundancy and an error rate of 0.16/10kb.</title>
        <authorList>
            <person name="Esposito J.J."/>
            <person name="Frace A.M."/>
            <person name="Sammons S.A."/>
            <person name="Olsen-Rasmussen M."/>
            <person name="Osborne J."/>
            <person name="Wohlhueter R."/>
        </authorList>
    </citation>
    <scope>NUCLEOTIDE SEQUENCE [LARGE SCALE GENOMIC DNA]</scope>
</reference>
<reference key="4">
    <citation type="journal article" date="1998" name="Arch. Virol.">
        <title>Effect of 3-beta-hydroxysteroid dehydrogenase gene deletion on virulence and immunogenicity of different vaccinia viruses and their recombinants.</title>
        <authorList>
            <person name="Sroller V."/>
            <person name="Kutinova L."/>
            <person name="Nemeckova S."/>
            <person name="Simonova V."/>
            <person name="Vonka V."/>
        </authorList>
    </citation>
    <scope>FUNCTION</scope>
</reference>
<reference key="5">
    <citation type="journal article" date="1992" name="EMBO J.">
        <title>Steroid hormone synthesis by a vaccinia enzyme: a new type of virus virulence factor.</title>
        <authorList>
            <person name="Moore J.B."/>
            <person name="Smith G.L."/>
        </authorList>
    </citation>
    <scope>FUNCTION</scope>
</reference>
<comment type="function">
    <text evidence="2 3">Catalyzes the oxidative conversion of Delta(5)-ene-3-beta-hydroxy steroid, and the oxidative conversion of ketosteroids. The 3-beta-HSD enzymatic system plays a crucial role in the biosynthesis of all classes of hormonal steroids. During viral infection, steroid production contributes to virulence by inhibiting the host inflammatory response.</text>
</comment>
<comment type="catalytic activity">
    <reaction>
        <text>a 3beta-hydroxy-Delta(5)-steroid + NAD(+) = a 3-oxo-Delta(5)-steroid + NADH + H(+)</text>
        <dbReference type="Rhea" id="RHEA:24076"/>
        <dbReference type="ChEBI" id="CHEBI:1722"/>
        <dbReference type="ChEBI" id="CHEBI:15378"/>
        <dbReference type="ChEBI" id="CHEBI:47907"/>
        <dbReference type="ChEBI" id="CHEBI:57540"/>
        <dbReference type="ChEBI" id="CHEBI:57945"/>
        <dbReference type="EC" id="1.1.1.145"/>
    </reaction>
</comment>
<comment type="catalytic activity">
    <reaction>
        <text>a 3-oxo-Delta(5)-steroid = a 3-oxo-Delta(4)-steroid</text>
        <dbReference type="Rhea" id="RHEA:14709"/>
        <dbReference type="ChEBI" id="CHEBI:47907"/>
        <dbReference type="ChEBI" id="CHEBI:47909"/>
        <dbReference type="EC" id="5.3.3.1"/>
    </reaction>
</comment>
<comment type="pathway">
    <text>Lipid metabolism; steroid biosynthesis.</text>
</comment>
<comment type="induction">
    <text>Expressed in the early phase of the viral replicative cycle.</text>
</comment>
<comment type="similarity">
    <text evidence="4">Belongs to the 3-beta-HSD family.</text>
</comment>
<feature type="chain" id="PRO_0000087795" description="3 beta-hydroxysteroid dehydrogenase/Delta 5--&gt;4-isomerase">
    <location>
        <begin position="1"/>
        <end position="346"/>
    </location>
</feature>
<feature type="active site" description="Proton acceptor" evidence="1">
    <location>
        <position position="147"/>
    </location>
</feature>
<feature type="binding site" evidence="1">
    <location>
        <position position="151"/>
    </location>
    <ligand>
        <name>NAD(+)</name>
        <dbReference type="ChEBI" id="CHEBI:57540"/>
    </ligand>
</feature>
<keyword id="KW-0244">Early protein</keyword>
<keyword id="KW-0945">Host-virus interaction</keyword>
<keyword id="KW-0413">Isomerase</keyword>
<keyword id="KW-0511">Multifunctional enzyme</keyword>
<keyword id="KW-0520">NAD</keyword>
<keyword id="KW-0560">Oxidoreductase</keyword>
<keyword id="KW-1185">Reference proteome</keyword>
<keyword id="KW-0755">Steroidogenesis</keyword>
<keyword id="KW-0899">Viral immunoevasion</keyword>
<proteinExistence type="evidence at transcript level"/>
<accession>P26670</accession>
<accession>Q76ZN3</accession>
<gene>
    <name type="primary">OPG174</name>
    <name type="ordered locus">VACWR170</name>
    <name type="ORF">SALF7L</name>
</gene>
<organismHost>
    <name type="scientific">Bos taurus</name>
    <name type="common">Bovine</name>
    <dbReference type="NCBI Taxonomy" id="9913"/>
</organismHost>
<name>3BHS_VACCW</name>